<reference key="1">
    <citation type="journal article" date="2007" name="Theor. Appl. Genet.">
        <title>Complete chloroplast genome sequences of Hordeum vulgare, Sorghum bicolor and Agrostis stolonifera, and comparative analyses with other grass genomes.</title>
        <authorList>
            <person name="Saski C."/>
            <person name="Lee S.-B."/>
            <person name="Fjellheim S."/>
            <person name="Guda C."/>
            <person name="Jansen R.K."/>
            <person name="Luo H."/>
            <person name="Tomkins J."/>
            <person name="Rognli O.A."/>
            <person name="Daniell H."/>
            <person name="Clarke J.L."/>
        </authorList>
    </citation>
    <scope>NUCLEOTIDE SEQUENCE [LARGE SCALE GENOMIC DNA]</scope>
    <source>
        <strain>cv. BTx623</strain>
    </source>
</reference>
<keyword id="KW-0150">Chloroplast</keyword>
<keyword id="KW-0472">Membrane</keyword>
<keyword id="KW-0602">Photosynthesis</keyword>
<keyword id="KW-0604">Photosystem II</keyword>
<keyword id="KW-0934">Plastid</keyword>
<keyword id="KW-0674">Reaction center</keyword>
<keyword id="KW-1185">Reference proteome</keyword>
<keyword id="KW-0793">Thylakoid</keyword>
<keyword id="KW-0812">Transmembrane</keyword>
<keyword id="KW-1133">Transmembrane helix</keyword>
<comment type="function">
    <text evidence="1">One of the components of the core complex of photosystem II (PSII). PSII is a light-driven water:plastoquinone oxidoreductase that uses light energy to abstract electrons from H(2)O, generating O(2) and a proton gradient subsequently used for ATP formation. It consists of a core antenna complex that captures photons, and an electron transfer chain that converts photonic excitation into a charge separation. This subunit is found at the monomer-monomer interface.</text>
</comment>
<comment type="subunit">
    <text evidence="1">PSII is composed of 1 copy each of membrane proteins PsbA, PsbB, PsbC, PsbD, PsbE, PsbF, PsbH, PsbI, PsbJ, PsbK, PsbL, PsbM, PsbT, PsbX, PsbY, PsbZ, Psb30/Ycf12, at least 3 peripheral proteins of the oxygen-evolving complex and a large number of cofactors. It forms dimeric complexes.</text>
</comment>
<comment type="subcellular location">
    <subcellularLocation>
        <location evidence="1">Plastid</location>
        <location evidence="1">Chloroplast thylakoid membrane</location>
        <topology evidence="1">Single-pass membrane protein</topology>
    </subcellularLocation>
</comment>
<comment type="similarity">
    <text evidence="1">Belongs to the PsbM family.</text>
</comment>
<evidence type="ECO:0000255" key="1">
    <source>
        <dbReference type="HAMAP-Rule" id="MF_00438"/>
    </source>
</evidence>
<name>PSBM_SORBI</name>
<geneLocation type="chloroplast"/>
<feature type="chain" id="PRO_0000276258" description="Photosystem II reaction center protein M">
    <location>
        <begin position="1"/>
        <end position="34"/>
    </location>
</feature>
<feature type="transmembrane region" description="Helical" evidence="1">
    <location>
        <begin position="5"/>
        <end position="25"/>
    </location>
</feature>
<proteinExistence type="inferred from homology"/>
<dbReference type="EMBL" id="EF115542">
    <property type="protein sequence ID" value="ABK79484.1"/>
    <property type="molecule type" value="Genomic_DNA"/>
</dbReference>
<dbReference type="RefSeq" id="YP_899395.1">
    <property type="nucleotide sequence ID" value="NC_008602.1"/>
</dbReference>
<dbReference type="SMR" id="A1E9R2"/>
<dbReference type="FunCoup" id="A1E9R2">
    <property type="interactions" value="44"/>
</dbReference>
<dbReference type="STRING" id="4558.A1E9R2"/>
<dbReference type="GeneID" id="4549129"/>
<dbReference type="KEGG" id="sbi:4549129"/>
<dbReference type="InParanoid" id="A1E9R2"/>
<dbReference type="OrthoDB" id="564131at2759"/>
<dbReference type="Proteomes" id="UP000000768">
    <property type="component" value="Chloroplast"/>
</dbReference>
<dbReference type="GO" id="GO:0009535">
    <property type="term" value="C:chloroplast thylakoid membrane"/>
    <property type="evidence" value="ECO:0007669"/>
    <property type="project" value="UniProtKB-SubCell"/>
</dbReference>
<dbReference type="GO" id="GO:0009523">
    <property type="term" value="C:photosystem II"/>
    <property type="evidence" value="ECO:0007669"/>
    <property type="project" value="UniProtKB-KW"/>
</dbReference>
<dbReference type="GO" id="GO:0019684">
    <property type="term" value="P:photosynthesis, light reaction"/>
    <property type="evidence" value="ECO:0007669"/>
    <property type="project" value="InterPro"/>
</dbReference>
<dbReference type="HAMAP" id="MF_00438">
    <property type="entry name" value="PSII_PsbM"/>
    <property type="match status" value="1"/>
</dbReference>
<dbReference type="InterPro" id="IPR007826">
    <property type="entry name" value="PSII_PsbM"/>
</dbReference>
<dbReference type="InterPro" id="IPR037269">
    <property type="entry name" value="PSII_PsbM_sf"/>
</dbReference>
<dbReference type="NCBIfam" id="TIGR03038">
    <property type="entry name" value="PS_II_psbM"/>
    <property type="match status" value="1"/>
</dbReference>
<dbReference type="PANTHER" id="PTHR35774">
    <property type="entry name" value="PHOTOSYSTEM II REACTION CENTER PROTEIN M"/>
    <property type="match status" value="1"/>
</dbReference>
<dbReference type="PANTHER" id="PTHR35774:SF1">
    <property type="entry name" value="PHOTOSYSTEM II REACTION CENTER PROTEIN M"/>
    <property type="match status" value="1"/>
</dbReference>
<dbReference type="Pfam" id="PF05151">
    <property type="entry name" value="PsbM"/>
    <property type="match status" value="1"/>
</dbReference>
<dbReference type="SUPFAM" id="SSF161033">
    <property type="entry name" value="Photosystem II reaction center protein M, PsbM"/>
    <property type="match status" value="1"/>
</dbReference>
<organism>
    <name type="scientific">Sorghum bicolor</name>
    <name type="common">Sorghum</name>
    <name type="synonym">Sorghum vulgare</name>
    <dbReference type="NCBI Taxonomy" id="4558"/>
    <lineage>
        <taxon>Eukaryota</taxon>
        <taxon>Viridiplantae</taxon>
        <taxon>Streptophyta</taxon>
        <taxon>Embryophyta</taxon>
        <taxon>Tracheophyta</taxon>
        <taxon>Spermatophyta</taxon>
        <taxon>Magnoliopsida</taxon>
        <taxon>Liliopsida</taxon>
        <taxon>Poales</taxon>
        <taxon>Poaceae</taxon>
        <taxon>PACMAD clade</taxon>
        <taxon>Panicoideae</taxon>
        <taxon>Andropogonodae</taxon>
        <taxon>Andropogoneae</taxon>
        <taxon>Sorghinae</taxon>
        <taxon>Sorghum</taxon>
    </lineage>
</organism>
<protein>
    <recommendedName>
        <fullName evidence="1">Photosystem II reaction center protein M</fullName>
        <shortName evidence="1">PSII-M</shortName>
    </recommendedName>
</protein>
<sequence length="34" mass="3755">MEVNILAFIATALFILVPTAFLLIIYVKTASQND</sequence>
<gene>
    <name evidence="1" type="primary">psbM</name>
</gene>
<accession>A1E9R2</accession>